<protein>
    <recommendedName>
        <fullName evidence="2">Ascorbate-specific PTS system EIIB component</fullName>
        <ecNumber evidence="2">2.7.1.194</ecNumber>
    </recommendedName>
    <alternativeName>
        <fullName evidence="2">Ascorbate-specific phosphotransferase enzyme IIB component</fullName>
    </alternativeName>
</protein>
<sequence>MTVRILAVCGNGQGSSMIMKMKVDQFLTQSNIDHTVNSCAVGEYKSELSGADIIIASTHIAGEITVTGNKYVVGVRNMLSPADFGPKLLEVIKEHFPQDVK</sequence>
<dbReference type="EC" id="2.7.1.194" evidence="2"/>
<dbReference type="EMBL" id="AE005174">
    <property type="protein sequence ID" value="AAG59390.1"/>
    <property type="molecule type" value="Genomic_DNA"/>
</dbReference>
<dbReference type="EMBL" id="BA000007">
    <property type="protein sequence ID" value="BAB38593.1"/>
    <property type="molecule type" value="Genomic_DNA"/>
</dbReference>
<dbReference type="PIR" id="B86116">
    <property type="entry name" value="B86116"/>
</dbReference>
<dbReference type="PIR" id="B91275">
    <property type="entry name" value="B91275"/>
</dbReference>
<dbReference type="RefSeq" id="NP_313197.1">
    <property type="nucleotide sequence ID" value="NC_002695.1"/>
</dbReference>
<dbReference type="RefSeq" id="WP_000218362.1">
    <property type="nucleotide sequence ID" value="NZ_VOAI01000008.1"/>
</dbReference>
<dbReference type="SMR" id="P69823"/>
<dbReference type="STRING" id="155864.Z5803"/>
<dbReference type="GeneID" id="89519181"/>
<dbReference type="GeneID" id="914003"/>
<dbReference type="KEGG" id="ece:Z5803"/>
<dbReference type="KEGG" id="ecs:ECs_5170"/>
<dbReference type="PATRIC" id="fig|386585.9.peg.5404"/>
<dbReference type="eggNOG" id="COG3414">
    <property type="taxonomic scope" value="Bacteria"/>
</dbReference>
<dbReference type="HOGENOM" id="CLU_159248_0_0_6"/>
<dbReference type="OMA" id="YDLIFCP"/>
<dbReference type="Proteomes" id="UP000000558">
    <property type="component" value="Chromosome"/>
</dbReference>
<dbReference type="Proteomes" id="UP000002519">
    <property type="component" value="Chromosome"/>
</dbReference>
<dbReference type="GO" id="GO:0005737">
    <property type="term" value="C:cytoplasm"/>
    <property type="evidence" value="ECO:0007669"/>
    <property type="project" value="UniProtKB-SubCell"/>
</dbReference>
<dbReference type="GO" id="GO:0016301">
    <property type="term" value="F:kinase activity"/>
    <property type="evidence" value="ECO:0007669"/>
    <property type="project" value="UniProtKB-KW"/>
</dbReference>
<dbReference type="GO" id="GO:0008982">
    <property type="term" value="F:protein-N(PI)-phosphohistidine-sugar phosphotransferase activity"/>
    <property type="evidence" value="ECO:0007669"/>
    <property type="project" value="InterPro"/>
</dbReference>
<dbReference type="GO" id="GO:0009401">
    <property type="term" value="P:phosphoenolpyruvate-dependent sugar phosphotransferase system"/>
    <property type="evidence" value="ECO:0007669"/>
    <property type="project" value="UniProtKB-KW"/>
</dbReference>
<dbReference type="CDD" id="cd05563">
    <property type="entry name" value="PTS_IIB_ascorbate"/>
    <property type="match status" value="1"/>
</dbReference>
<dbReference type="FunFam" id="3.40.50.2300:FF:000030">
    <property type="entry name" value="PTS system, ascorbate-specific, IIB component"/>
    <property type="match status" value="1"/>
</dbReference>
<dbReference type="Gene3D" id="3.40.50.2300">
    <property type="match status" value="1"/>
</dbReference>
<dbReference type="InterPro" id="IPR036095">
    <property type="entry name" value="PTS_EIIB-like_sf"/>
</dbReference>
<dbReference type="InterPro" id="IPR013011">
    <property type="entry name" value="PTS_EIIB_2"/>
</dbReference>
<dbReference type="InterPro" id="IPR003501">
    <property type="entry name" value="PTS_EIIB_2/3"/>
</dbReference>
<dbReference type="NCBIfam" id="NF007586">
    <property type="entry name" value="PRK10222.1"/>
    <property type="match status" value="1"/>
</dbReference>
<dbReference type="Pfam" id="PF02302">
    <property type="entry name" value="PTS_IIB"/>
    <property type="match status" value="1"/>
</dbReference>
<dbReference type="SUPFAM" id="SSF52794">
    <property type="entry name" value="PTS system IIB component-like"/>
    <property type="match status" value="1"/>
</dbReference>
<dbReference type="PROSITE" id="PS51099">
    <property type="entry name" value="PTS_EIIB_TYPE_2"/>
    <property type="match status" value="1"/>
</dbReference>
<accession>P69823</accession>
<accession>P39302</accession>
<gene>
    <name type="primary">ulaB</name>
    <name type="synonym">sgaB</name>
    <name type="ordered locus">Z5803</name>
    <name type="ordered locus">ECs5170</name>
</gene>
<organism>
    <name type="scientific">Escherichia coli O157:H7</name>
    <dbReference type="NCBI Taxonomy" id="83334"/>
    <lineage>
        <taxon>Bacteria</taxon>
        <taxon>Pseudomonadati</taxon>
        <taxon>Pseudomonadota</taxon>
        <taxon>Gammaproteobacteria</taxon>
        <taxon>Enterobacterales</taxon>
        <taxon>Enterobacteriaceae</taxon>
        <taxon>Escherichia</taxon>
    </lineage>
</organism>
<comment type="function">
    <text evidence="2">The phosphoenolpyruvate-dependent sugar phosphotransferase system (sugar PTS), a major carbohydrate active transport system, catalyzes the phosphorylation of incoming sugar substrates concomitantly with their translocation across the cell membrane. The enzyme II UlaABC PTS system is involved in ascorbate transport.</text>
</comment>
<comment type="catalytic activity">
    <reaction evidence="2">
        <text>N(pros)-phospho-L-histidyl-[protein] + L-ascorbate(out) = L-ascorbate 6-phosphate(in) + L-histidyl-[protein]</text>
        <dbReference type="Rhea" id="RHEA:42436"/>
        <dbReference type="Rhea" id="RHEA-COMP:9745"/>
        <dbReference type="Rhea" id="RHEA-COMP:9746"/>
        <dbReference type="ChEBI" id="CHEBI:29979"/>
        <dbReference type="ChEBI" id="CHEBI:38290"/>
        <dbReference type="ChEBI" id="CHEBI:61698"/>
        <dbReference type="ChEBI" id="CHEBI:64837"/>
        <dbReference type="EC" id="2.7.1.194"/>
    </reaction>
</comment>
<comment type="subcellular location">
    <subcellularLocation>
        <location evidence="4">Cytoplasm</location>
    </subcellularLocation>
</comment>
<comment type="induction">
    <text evidence="2">Induced by L-ascorbate. Repressed by UlaR.</text>
</comment>
<comment type="domain">
    <text evidence="3">The PTS EIIB type-2 domain is phosphorylated by phospho-EIIA on a cysteinyl residue. Then, it transfers the phosphoryl group to the sugar substrate concomitantly with the sugar uptake processed by the PTS EIIC type-2 domain.</text>
</comment>
<evidence type="ECO:0000250" key="1">
    <source>
        <dbReference type="UniProtKB" id="P00550"/>
    </source>
</evidence>
<evidence type="ECO:0000250" key="2">
    <source>
        <dbReference type="UniProtKB" id="P69822"/>
    </source>
</evidence>
<evidence type="ECO:0000255" key="3">
    <source>
        <dbReference type="PROSITE-ProRule" id="PRU00422"/>
    </source>
</evidence>
<evidence type="ECO:0000305" key="4"/>
<feature type="chain" id="PRO_0000186687" description="Ascorbate-specific PTS system EIIB component">
    <location>
        <begin position="1"/>
        <end position="101"/>
    </location>
</feature>
<feature type="domain" description="PTS EIIB type-2" evidence="3">
    <location>
        <begin position="1"/>
        <end position="100"/>
    </location>
</feature>
<feature type="active site" description="Phosphocysteine intermediate" evidence="1 4">
    <location>
        <position position="9"/>
    </location>
</feature>
<feature type="modified residue" description="Phosphocysteine" evidence="1 4">
    <location>
        <position position="9"/>
    </location>
</feature>
<keyword id="KW-0963">Cytoplasm</keyword>
<keyword id="KW-0418">Kinase</keyword>
<keyword id="KW-0597">Phosphoprotein</keyword>
<keyword id="KW-0598">Phosphotransferase system</keyword>
<keyword id="KW-1185">Reference proteome</keyword>
<keyword id="KW-0808">Transferase</keyword>
<keyword id="KW-0813">Transport</keyword>
<name>ULAB_ECO57</name>
<reference key="1">
    <citation type="journal article" date="2001" name="Nature">
        <title>Genome sequence of enterohaemorrhagic Escherichia coli O157:H7.</title>
        <authorList>
            <person name="Perna N.T."/>
            <person name="Plunkett G. III"/>
            <person name="Burland V."/>
            <person name="Mau B."/>
            <person name="Glasner J.D."/>
            <person name="Rose D.J."/>
            <person name="Mayhew G.F."/>
            <person name="Evans P.S."/>
            <person name="Gregor J."/>
            <person name="Kirkpatrick H.A."/>
            <person name="Posfai G."/>
            <person name="Hackett J."/>
            <person name="Klink S."/>
            <person name="Boutin A."/>
            <person name="Shao Y."/>
            <person name="Miller L."/>
            <person name="Grotbeck E.J."/>
            <person name="Davis N.W."/>
            <person name="Lim A."/>
            <person name="Dimalanta E.T."/>
            <person name="Potamousis K."/>
            <person name="Apodaca J."/>
            <person name="Anantharaman T.S."/>
            <person name="Lin J."/>
            <person name="Yen G."/>
            <person name="Schwartz D.C."/>
            <person name="Welch R.A."/>
            <person name="Blattner F.R."/>
        </authorList>
    </citation>
    <scope>NUCLEOTIDE SEQUENCE [LARGE SCALE GENOMIC DNA]</scope>
    <source>
        <strain>O157:H7 / EDL933 / ATCC 700927 / EHEC</strain>
    </source>
</reference>
<reference key="2">
    <citation type="journal article" date="2001" name="DNA Res.">
        <title>Complete genome sequence of enterohemorrhagic Escherichia coli O157:H7 and genomic comparison with a laboratory strain K-12.</title>
        <authorList>
            <person name="Hayashi T."/>
            <person name="Makino K."/>
            <person name="Ohnishi M."/>
            <person name="Kurokawa K."/>
            <person name="Ishii K."/>
            <person name="Yokoyama K."/>
            <person name="Han C.-G."/>
            <person name="Ohtsubo E."/>
            <person name="Nakayama K."/>
            <person name="Murata T."/>
            <person name="Tanaka M."/>
            <person name="Tobe T."/>
            <person name="Iida T."/>
            <person name="Takami H."/>
            <person name="Honda T."/>
            <person name="Sasakawa C."/>
            <person name="Ogasawara N."/>
            <person name="Yasunaga T."/>
            <person name="Kuhara S."/>
            <person name="Shiba T."/>
            <person name="Hattori M."/>
            <person name="Shinagawa H."/>
        </authorList>
    </citation>
    <scope>NUCLEOTIDE SEQUENCE [LARGE SCALE GENOMIC DNA]</scope>
    <source>
        <strain>O157:H7 / Sakai / RIMD 0509952 / EHEC</strain>
    </source>
</reference>
<proteinExistence type="inferred from homology"/>